<protein>
    <recommendedName>
        <fullName evidence="2">D-alanine--D-alanine ligase</fullName>
        <ecNumber evidence="2">6.3.2.4</ecNumber>
    </recommendedName>
    <alternativeName>
        <fullName evidence="2">D-Ala-D-Ala ligase</fullName>
    </alternativeName>
    <alternativeName>
        <fullName evidence="2">D-alanylalanine synthetase</fullName>
    </alternativeName>
</protein>
<comment type="function">
    <text evidence="2">Cell wall formation.</text>
</comment>
<comment type="catalytic activity">
    <reaction evidence="2">
        <text>2 D-alanine + ATP = D-alanyl-D-alanine + ADP + phosphate + H(+)</text>
        <dbReference type="Rhea" id="RHEA:11224"/>
        <dbReference type="ChEBI" id="CHEBI:15378"/>
        <dbReference type="ChEBI" id="CHEBI:30616"/>
        <dbReference type="ChEBI" id="CHEBI:43474"/>
        <dbReference type="ChEBI" id="CHEBI:57416"/>
        <dbReference type="ChEBI" id="CHEBI:57822"/>
        <dbReference type="ChEBI" id="CHEBI:456216"/>
        <dbReference type="EC" id="6.3.2.4"/>
    </reaction>
</comment>
<comment type="cofactor">
    <cofactor evidence="1">
        <name>Mg(2+)</name>
        <dbReference type="ChEBI" id="CHEBI:18420"/>
    </cofactor>
    <cofactor evidence="1">
        <name>Mn(2+)</name>
        <dbReference type="ChEBI" id="CHEBI:29035"/>
    </cofactor>
    <text evidence="1">Binds 2 magnesium or manganese ions per subunit.</text>
</comment>
<comment type="pathway">
    <text evidence="2">Cell wall biogenesis; peptidoglycan biosynthesis.</text>
</comment>
<comment type="subcellular location">
    <subcellularLocation>
        <location evidence="2">Cytoplasm</location>
    </subcellularLocation>
</comment>
<comment type="similarity">
    <text evidence="2">Belongs to the D-alanine--D-alanine ligase family.</text>
</comment>
<sequence length="297" mass="32760">MQKEKIVVLYGGDSPEREVSLKSGKAVLDSLLNQGYDAVGLDASSKDLVVKLLELNPDKCFIALHGEDGENGRVAALLELLGIKHTGSTMKSCVVTMDKMISKEILMHHRMPTPMAKFLTDRLVEADEISFPVAVKPSSGGSSIATFKVKSLEELENAYQQASKHGEVMIEQWVTGKEITVAIVNNDVYSSVWIEPLNEFYDYESKYSGKSIYHAPSGLCEQKELEVRQLAKKAYDLLGCKGHARVDFIYDDKGDFYIMEINSSPGMTENSLSPKSAAAEGIDFDSFVKSILEQAQC</sequence>
<gene>
    <name evidence="2" type="primary">ddl</name>
    <name type="ordered locus">Fphi_0663</name>
</gene>
<evidence type="ECO:0000250" key="1"/>
<evidence type="ECO:0000255" key="2">
    <source>
        <dbReference type="HAMAP-Rule" id="MF_00047"/>
    </source>
</evidence>
<accession>B0TVX5</accession>
<organism>
    <name type="scientific">Francisella philomiragia subsp. philomiragia (strain ATCC 25017 / CCUG 19701 / FSC 153 / O#319-036)</name>
    <dbReference type="NCBI Taxonomy" id="484022"/>
    <lineage>
        <taxon>Bacteria</taxon>
        <taxon>Pseudomonadati</taxon>
        <taxon>Pseudomonadota</taxon>
        <taxon>Gammaproteobacteria</taxon>
        <taxon>Thiotrichales</taxon>
        <taxon>Francisellaceae</taxon>
        <taxon>Francisella</taxon>
    </lineage>
</organism>
<keyword id="KW-0067">ATP-binding</keyword>
<keyword id="KW-0133">Cell shape</keyword>
<keyword id="KW-0961">Cell wall biogenesis/degradation</keyword>
<keyword id="KW-0963">Cytoplasm</keyword>
<keyword id="KW-0436">Ligase</keyword>
<keyword id="KW-0460">Magnesium</keyword>
<keyword id="KW-0464">Manganese</keyword>
<keyword id="KW-0479">Metal-binding</keyword>
<keyword id="KW-0547">Nucleotide-binding</keyword>
<keyword id="KW-0573">Peptidoglycan synthesis</keyword>
<reference key="1">
    <citation type="submission" date="2007-12" db="EMBL/GenBank/DDBJ databases">
        <title>Complete sequence of chromosome of Francisella philomiragia subsp. philomiragia ATCC 25017.</title>
        <authorList>
            <consortium name="US DOE Joint Genome Institute"/>
            <person name="Copeland A."/>
            <person name="Lucas S."/>
            <person name="Lapidus A."/>
            <person name="Barry K."/>
            <person name="Detter J.C."/>
            <person name="Glavina del Rio T."/>
            <person name="Hammon N."/>
            <person name="Israni S."/>
            <person name="Dalin E."/>
            <person name="Tice H."/>
            <person name="Pitluck S."/>
            <person name="Chain P."/>
            <person name="Malfatti S."/>
            <person name="Shin M."/>
            <person name="Vergez L."/>
            <person name="Schmutz J."/>
            <person name="Larimer F."/>
            <person name="Land M."/>
            <person name="Hauser L."/>
            <person name="Richardson P."/>
        </authorList>
    </citation>
    <scope>NUCLEOTIDE SEQUENCE [LARGE SCALE GENOMIC DNA]</scope>
    <source>
        <strain>ATCC 25017 / CCUG 19701 / FSC 153 / O#319-036</strain>
    </source>
</reference>
<dbReference type="EC" id="6.3.2.4" evidence="2"/>
<dbReference type="EMBL" id="CP000937">
    <property type="protein sequence ID" value="ABZ86883.1"/>
    <property type="molecule type" value="Genomic_DNA"/>
</dbReference>
<dbReference type="SMR" id="B0TVX5"/>
<dbReference type="KEGG" id="fph:Fphi_0663"/>
<dbReference type="eggNOG" id="COG1181">
    <property type="taxonomic scope" value="Bacteria"/>
</dbReference>
<dbReference type="HOGENOM" id="CLU_039268_1_1_6"/>
<dbReference type="UniPathway" id="UPA00219"/>
<dbReference type="GO" id="GO:0005737">
    <property type="term" value="C:cytoplasm"/>
    <property type="evidence" value="ECO:0007669"/>
    <property type="project" value="UniProtKB-SubCell"/>
</dbReference>
<dbReference type="GO" id="GO:0005524">
    <property type="term" value="F:ATP binding"/>
    <property type="evidence" value="ECO:0007669"/>
    <property type="project" value="UniProtKB-KW"/>
</dbReference>
<dbReference type="GO" id="GO:0008716">
    <property type="term" value="F:D-alanine-D-alanine ligase activity"/>
    <property type="evidence" value="ECO:0007669"/>
    <property type="project" value="UniProtKB-UniRule"/>
</dbReference>
<dbReference type="GO" id="GO:0046872">
    <property type="term" value="F:metal ion binding"/>
    <property type="evidence" value="ECO:0007669"/>
    <property type="project" value="UniProtKB-KW"/>
</dbReference>
<dbReference type="GO" id="GO:0071555">
    <property type="term" value="P:cell wall organization"/>
    <property type="evidence" value="ECO:0007669"/>
    <property type="project" value="UniProtKB-KW"/>
</dbReference>
<dbReference type="GO" id="GO:0009252">
    <property type="term" value="P:peptidoglycan biosynthetic process"/>
    <property type="evidence" value="ECO:0007669"/>
    <property type="project" value="UniProtKB-UniRule"/>
</dbReference>
<dbReference type="GO" id="GO:0008360">
    <property type="term" value="P:regulation of cell shape"/>
    <property type="evidence" value="ECO:0007669"/>
    <property type="project" value="UniProtKB-KW"/>
</dbReference>
<dbReference type="Gene3D" id="3.40.50.20">
    <property type="match status" value="1"/>
</dbReference>
<dbReference type="Gene3D" id="3.30.1490.20">
    <property type="entry name" value="ATP-grasp fold, A domain"/>
    <property type="match status" value="1"/>
</dbReference>
<dbReference type="Gene3D" id="3.30.470.20">
    <property type="entry name" value="ATP-grasp fold, B domain"/>
    <property type="match status" value="1"/>
</dbReference>
<dbReference type="HAMAP" id="MF_00047">
    <property type="entry name" value="Dala_Dala_lig"/>
    <property type="match status" value="1"/>
</dbReference>
<dbReference type="InterPro" id="IPR011761">
    <property type="entry name" value="ATP-grasp"/>
</dbReference>
<dbReference type="InterPro" id="IPR013815">
    <property type="entry name" value="ATP_grasp_subdomain_1"/>
</dbReference>
<dbReference type="InterPro" id="IPR000291">
    <property type="entry name" value="D-Ala_lig_Van_CS"/>
</dbReference>
<dbReference type="InterPro" id="IPR005905">
    <property type="entry name" value="D_ala_D_ala"/>
</dbReference>
<dbReference type="InterPro" id="IPR011095">
    <property type="entry name" value="Dala_Dala_lig_C"/>
</dbReference>
<dbReference type="InterPro" id="IPR016185">
    <property type="entry name" value="PreATP-grasp_dom_sf"/>
</dbReference>
<dbReference type="NCBIfam" id="TIGR01205">
    <property type="entry name" value="D_ala_D_alaTIGR"/>
    <property type="match status" value="1"/>
</dbReference>
<dbReference type="NCBIfam" id="NF002378">
    <property type="entry name" value="PRK01372.1"/>
    <property type="match status" value="1"/>
</dbReference>
<dbReference type="NCBIfam" id="NF011167">
    <property type="entry name" value="PRK14569.1"/>
    <property type="match status" value="1"/>
</dbReference>
<dbReference type="PANTHER" id="PTHR23132">
    <property type="entry name" value="D-ALANINE--D-ALANINE LIGASE"/>
    <property type="match status" value="1"/>
</dbReference>
<dbReference type="PANTHER" id="PTHR23132:SF23">
    <property type="entry name" value="D-ALANINE--D-ALANINE LIGASE B"/>
    <property type="match status" value="1"/>
</dbReference>
<dbReference type="Pfam" id="PF07478">
    <property type="entry name" value="Dala_Dala_lig_C"/>
    <property type="match status" value="1"/>
</dbReference>
<dbReference type="PIRSF" id="PIRSF039102">
    <property type="entry name" value="Ddl/VanB"/>
    <property type="match status" value="1"/>
</dbReference>
<dbReference type="SUPFAM" id="SSF56059">
    <property type="entry name" value="Glutathione synthetase ATP-binding domain-like"/>
    <property type="match status" value="1"/>
</dbReference>
<dbReference type="SUPFAM" id="SSF52440">
    <property type="entry name" value="PreATP-grasp domain"/>
    <property type="match status" value="1"/>
</dbReference>
<dbReference type="PROSITE" id="PS50975">
    <property type="entry name" value="ATP_GRASP"/>
    <property type="match status" value="1"/>
</dbReference>
<dbReference type="PROSITE" id="PS00843">
    <property type="entry name" value="DALA_DALA_LIGASE_1"/>
    <property type="match status" value="1"/>
</dbReference>
<dbReference type="PROSITE" id="PS00844">
    <property type="entry name" value="DALA_DALA_LIGASE_2"/>
    <property type="match status" value="1"/>
</dbReference>
<proteinExistence type="inferred from homology"/>
<name>DDL_FRAP2</name>
<feature type="chain" id="PRO_0000341093" description="D-alanine--D-alanine ligase">
    <location>
        <begin position="1"/>
        <end position="297"/>
    </location>
</feature>
<feature type="domain" description="ATP-grasp" evidence="2">
    <location>
        <begin position="103"/>
        <end position="293"/>
    </location>
</feature>
<feature type="binding site" evidence="2">
    <location>
        <begin position="129"/>
        <end position="180"/>
    </location>
    <ligand>
        <name>ATP</name>
        <dbReference type="ChEBI" id="CHEBI:30616"/>
    </ligand>
</feature>
<feature type="binding site" evidence="2">
    <location>
        <position position="247"/>
    </location>
    <ligand>
        <name>Mg(2+)</name>
        <dbReference type="ChEBI" id="CHEBI:18420"/>
        <label>1</label>
    </ligand>
</feature>
<feature type="binding site" evidence="2">
    <location>
        <position position="260"/>
    </location>
    <ligand>
        <name>Mg(2+)</name>
        <dbReference type="ChEBI" id="CHEBI:18420"/>
        <label>1</label>
    </ligand>
</feature>
<feature type="binding site" evidence="2">
    <location>
        <position position="260"/>
    </location>
    <ligand>
        <name>Mg(2+)</name>
        <dbReference type="ChEBI" id="CHEBI:18420"/>
        <label>2</label>
    </ligand>
</feature>
<feature type="binding site" evidence="2">
    <location>
        <position position="262"/>
    </location>
    <ligand>
        <name>Mg(2+)</name>
        <dbReference type="ChEBI" id="CHEBI:18420"/>
        <label>2</label>
    </ligand>
</feature>